<protein>
    <recommendedName>
        <fullName evidence="1">tRNA modification GTPase MnmE</fullName>
        <ecNumber evidence="1">3.6.-.-</ecNumber>
    </recommendedName>
</protein>
<dbReference type="EC" id="3.6.-.-" evidence="1"/>
<dbReference type="EMBL" id="CP000159">
    <property type="protein sequence ID" value="ABC44889.1"/>
    <property type="molecule type" value="Genomic_DNA"/>
</dbReference>
<dbReference type="RefSeq" id="WP_011402842.1">
    <property type="nucleotide sequence ID" value="NC_007677.1"/>
</dbReference>
<dbReference type="RefSeq" id="YP_444209.1">
    <property type="nucleotide sequence ID" value="NC_007677.1"/>
</dbReference>
<dbReference type="SMR" id="Q2S6H2"/>
<dbReference type="STRING" id="309807.SRU_0056"/>
<dbReference type="EnsemblBacteria" id="ABC44889">
    <property type="protein sequence ID" value="ABC44889"/>
    <property type="gene ID" value="SRU_0056"/>
</dbReference>
<dbReference type="GeneID" id="83726886"/>
<dbReference type="KEGG" id="sru:SRU_0056"/>
<dbReference type="PATRIC" id="fig|309807.25.peg.55"/>
<dbReference type="eggNOG" id="COG0486">
    <property type="taxonomic scope" value="Bacteria"/>
</dbReference>
<dbReference type="HOGENOM" id="CLU_019624_4_1_10"/>
<dbReference type="OrthoDB" id="9805918at2"/>
<dbReference type="Proteomes" id="UP000008674">
    <property type="component" value="Chromosome"/>
</dbReference>
<dbReference type="GO" id="GO:0005829">
    <property type="term" value="C:cytosol"/>
    <property type="evidence" value="ECO:0007669"/>
    <property type="project" value="TreeGrafter"/>
</dbReference>
<dbReference type="GO" id="GO:0005525">
    <property type="term" value="F:GTP binding"/>
    <property type="evidence" value="ECO:0007669"/>
    <property type="project" value="UniProtKB-UniRule"/>
</dbReference>
<dbReference type="GO" id="GO:0003924">
    <property type="term" value="F:GTPase activity"/>
    <property type="evidence" value="ECO:0007669"/>
    <property type="project" value="UniProtKB-UniRule"/>
</dbReference>
<dbReference type="GO" id="GO:0046872">
    <property type="term" value="F:metal ion binding"/>
    <property type="evidence" value="ECO:0007669"/>
    <property type="project" value="UniProtKB-KW"/>
</dbReference>
<dbReference type="GO" id="GO:0030488">
    <property type="term" value="P:tRNA methylation"/>
    <property type="evidence" value="ECO:0007669"/>
    <property type="project" value="TreeGrafter"/>
</dbReference>
<dbReference type="GO" id="GO:0002098">
    <property type="term" value="P:tRNA wobble uridine modification"/>
    <property type="evidence" value="ECO:0007669"/>
    <property type="project" value="TreeGrafter"/>
</dbReference>
<dbReference type="CDD" id="cd04164">
    <property type="entry name" value="trmE"/>
    <property type="match status" value="1"/>
</dbReference>
<dbReference type="CDD" id="cd14858">
    <property type="entry name" value="TrmE_N"/>
    <property type="match status" value="1"/>
</dbReference>
<dbReference type="FunFam" id="3.30.1360.120:FF:000003">
    <property type="entry name" value="tRNA modification GTPase MnmE"/>
    <property type="match status" value="1"/>
</dbReference>
<dbReference type="Gene3D" id="3.40.50.300">
    <property type="entry name" value="P-loop containing nucleotide triphosphate hydrolases"/>
    <property type="match status" value="1"/>
</dbReference>
<dbReference type="Gene3D" id="3.30.1360.120">
    <property type="entry name" value="Probable tRNA modification gtpase trme, domain 1"/>
    <property type="match status" value="1"/>
</dbReference>
<dbReference type="Gene3D" id="1.20.120.430">
    <property type="entry name" value="tRNA modification GTPase MnmE domain 2"/>
    <property type="match status" value="1"/>
</dbReference>
<dbReference type="HAMAP" id="MF_00379">
    <property type="entry name" value="GTPase_MnmE"/>
    <property type="match status" value="1"/>
</dbReference>
<dbReference type="InterPro" id="IPR031168">
    <property type="entry name" value="G_TrmE"/>
</dbReference>
<dbReference type="InterPro" id="IPR006073">
    <property type="entry name" value="GTP-bd"/>
</dbReference>
<dbReference type="InterPro" id="IPR018948">
    <property type="entry name" value="GTP-bd_TrmE_N"/>
</dbReference>
<dbReference type="InterPro" id="IPR004520">
    <property type="entry name" value="GTPase_MnmE"/>
</dbReference>
<dbReference type="InterPro" id="IPR027368">
    <property type="entry name" value="MnmE_dom2"/>
</dbReference>
<dbReference type="InterPro" id="IPR025867">
    <property type="entry name" value="MnmE_helical"/>
</dbReference>
<dbReference type="InterPro" id="IPR027417">
    <property type="entry name" value="P-loop_NTPase"/>
</dbReference>
<dbReference type="InterPro" id="IPR005225">
    <property type="entry name" value="Small_GTP-bd"/>
</dbReference>
<dbReference type="InterPro" id="IPR027266">
    <property type="entry name" value="TrmE/GcvT_dom1"/>
</dbReference>
<dbReference type="NCBIfam" id="TIGR00450">
    <property type="entry name" value="mnmE_trmE_thdF"/>
    <property type="match status" value="1"/>
</dbReference>
<dbReference type="NCBIfam" id="NF003661">
    <property type="entry name" value="PRK05291.1-3"/>
    <property type="match status" value="1"/>
</dbReference>
<dbReference type="NCBIfam" id="TIGR00231">
    <property type="entry name" value="small_GTP"/>
    <property type="match status" value="1"/>
</dbReference>
<dbReference type="PANTHER" id="PTHR42714">
    <property type="entry name" value="TRNA MODIFICATION GTPASE GTPBP3"/>
    <property type="match status" value="1"/>
</dbReference>
<dbReference type="PANTHER" id="PTHR42714:SF2">
    <property type="entry name" value="TRNA MODIFICATION GTPASE GTPBP3, MITOCHONDRIAL"/>
    <property type="match status" value="1"/>
</dbReference>
<dbReference type="Pfam" id="PF01926">
    <property type="entry name" value="MMR_HSR1"/>
    <property type="match status" value="1"/>
</dbReference>
<dbReference type="Pfam" id="PF12631">
    <property type="entry name" value="MnmE_helical"/>
    <property type="match status" value="1"/>
</dbReference>
<dbReference type="Pfam" id="PF10396">
    <property type="entry name" value="TrmE_N"/>
    <property type="match status" value="1"/>
</dbReference>
<dbReference type="SUPFAM" id="SSF52540">
    <property type="entry name" value="P-loop containing nucleoside triphosphate hydrolases"/>
    <property type="match status" value="1"/>
</dbReference>
<dbReference type="SUPFAM" id="SSF116878">
    <property type="entry name" value="TrmE connector domain"/>
    <property type="match status" value="1"/>
</dbReference>
<dbReference type="PROSITE" id="PS51709">
    <property type="entry name" value="G_TRME"/>
    <property type="match status" value="1"/>
</dbReference>
<reference key="1">
    <citation type="journal article" date="2005" name="Proc. Natl. Acad. Sci. U.S.A.">
        <title>The genome of Salinibacter ruber: convergence and gene exchange among hyperhalophilic bacteria and archaea.</title>
        <authorList>
            <person name="Mongodin E.F."/>
            <person name="Nelson K.E."/>
            <person name="Daugherty S."/>
            <person name="DeBoy R.T."/>
            <person name="Wister J."/>
            <person name="Khouri H."/>
            <person name="Weidman J."/>
            <person name="Walsh D.A."/>
            <person name="Papke R.T."/>
            <person name="Sanchez Perez G."/>
            <person name="Sharma A.K."/>
            <person name="Nesbo C.L."/>
            <person name="MacLeod D."/>
            <person name="Bapteste E."/>
            <person name="Doolittle W.F."/>
            <person name="Charlebois R.L."/>
            <person name="Legault B."/>
            <person name="Rodriguez-Valera F."/>
        </authorList>
    </citation>
    <scope>NUCLEOTIDE SEQUENCE [LARGE SCALE GENOMIC DNA]</scope>
    <source>
        <strain>DSM 13855 / CECT 5946 / M31</strain>
    </source>
</reference>
<gene>
    <name evidence="1" type="primary">mnmE</name>
    <name evidence="1" type="synonym">trmE</name>
    <name type="ordered locus">SRU_0056</name>
</gene>
<feature type="chain" id="PRO_0000345899" description="tRNA modification GTPase MnmE">
    <location>
        <begin position="1"/>
        <end position="461"/>
    </location>
</feature>
<feature type="domain" description="TrmE-type G">
    <location>
        <begin position="219"/>
        <end position="382"/>
    </location>
</feature>
<feature type="binding site" evidence="1">
    <location>
        <position position="23"/>
    </location>
    <ligand>
        <name>(6S)-5-formyl-5,6,7,8-tetrahydrofolate</name>
        <dbReference type="ChEBI" id="CHEBI:57457"/>
    </ligand>
</feature>
<feature type="binding site" evidence="1">
    <location>
        <position position="84"/>
    </location>
    <ligand>
        <name>(6S)-5-formyl-5,6,7,8-tetrahydrofolate</name>
        <dbReference type="ChEBI" id="CHEBI:57457"/>
    </ligand>
</feature>
<feature type="binding site" evidence="1">
    <location>
        <position position="123"/>
    </location>
    <ligand>
        <name>(6S)-5-formyl-5,6,7,8-tetrahydrofolate</name>
        <dbReference type="ChEBI" id="CHEBI:57457"/>
    </ligand>
</feature>
<feature type="binding site" evidence="1">
    <location>
        <begin position="229"/>
        <end position="234"/>
    </location>
    <ligand>
        <name>GTP</name>
        <dbReference type="ChEBI" id="CHEBI:37565"/>
    </ligand>
</feature>
<feature type="binding site" evidence="1">
    <location>
        <position position="233"/>
    </location>
    <ligand>
        <name>Mg(2+)</name>
        <dbReference type="ChEBI" id="CHEBI:18420"/>
    </ligand>
</feature>
<feature type="binding site" evidence="1">
    <location>
        <begin position="248"/>
        <end position="254"/>
    </location>
    <ligand>
        <name>GTP</name>
        <dbReference type="ChEBI" id="CHEBI:37565"/>
    </ligand>
</feature>
<feature type="binding site" evidence="1">
    <location>
        <position position="254"/>
    </location>
    <ligand>
        <name>Mg(2+)</name>
        <dbReference type="ChEBI" id="CHEBI:18420"/>
    </ligand>
</feature>
<feature type="binding site" evidence="1">
    <location>
        <begin position="273"/>
        <end position="276"/>
    </location>
    <ligand>
        <name>GTP</name>
        <dbReference type="ChEBI" id="CHEBI:37565"/>
    </ligand>
</feature>
<feature type="binding site" evidence="1">
    <location>
        <begin position="337"/>
        <end position="340"/>
    </location>
    <ligand>
        <name>GTP</name>
        <dbReference type="ChEBI" id="CHEBI:37565"/>
    </ligand>
</feature>
<feature type="binding site" evidence="1">
    <location>
        <position position="461"/>
    </location>
    <ligand>
        <name>(6S)-5-formyl-5,6,7,8-tetrahydrofolate</name>
        <dbReference type="ChEBI" id="CHEBI:57457"/>
    </ligand>
</feature>
<organism>
    <name type="scientific">Salinibacter ruber (strain DSM 13855 / M31)</name>
    <dbReference type="NCBI Taxonomy" id="309807"/>
    <lineage>
        <taxon>Bacteria</taxon>
        <taxon>Pseudomonadati</taxon>
        <taxon>Rhodothermota</taxon>
        <taxon>Rhodothermia</taxon>
        <taxon>Rhodothermales</taxon>
        <taxon>Salinibacteraceae</taxon>
        <taxon>Salinibacter</taxon>
    </lineage>
</organism>
<name>MNME_SALRD</name>
<sequence>MSQSDTIAAIATARGRAALAVVRTSGPAAIEIVDRCFRGDALTDADSHTAHVGVLTDEAGTDIDQVVATVFRAPNSATGEHVVEVSCHGGDLAPKMALQSLLDHGARMAEPGEFTERAFLNGKMDLAQAEAVADLIDATSTKAHQASLTHLKGRYSDLLGDLREELLNLCSLVELEIDFSDEDVEFADRERLEDLLDETEEILGDLLDTYPTGEKLKDGVQVVIGGRPNAGKSTLLNALVGHDRAIVSETPGTTRDEIEAEAEIEGVLFRFVDTAGLRDTADEIEAEGVRRATESIEEADVLFYLYDLTVGLDSQEIAFLQDLADDGSDVQPVVIGNKADRAPDLPVATLDGLTSLKLSALEAREDADEVQPLLDHLTDTVAEHLSRAEASPVVMNQRHRQHLRDALDAVQQAREALDAGVSGDMLTLDLRAALQELGAITGEITNEDVLDQIFSRFCIGK</sequence>
<keyword id="KW-0963">Cytoplasm</keyword>
<keyword id="KW-0342">GTP-binding</keyword>
<keyword id="KW-0378">Hydrolase</keyword>
<keyword id="KW-0460">Magnesium</keyword>
<keyword id="KW-0479">Metal-binding</keyword>
<keyword id="KW-0547">Nucleotide-binding</keyword>
<keyword id="KW-0630">Potassium</keyword>
<keyword id="KW-1185">Reference proteome</keyword>
<keyword id="KW-0819">tRNA processing</keyword>
<evidence type="ECO:0000255" key="1">
    <source>
        <dbReference type="HAMAP-Rule" id="MF_00379"/>
    </source>
</evidence>
<accession>Q2S6H2</accession>
<proteinExistence type="inferred from homology"/>
<comment type="function">
    <text evidence="1">Exhibits a very high intrinsic GTPase hydrolysis rate. Involved in the addition of a carboxymethylaminomethyl (cmnm) group at the wobble position (U34) of certain tRNAs, forming tRNA-cmnm(5)s(2)U34.</text>
</comment>
<comment type="cofactor">
    <cofactor evidence="1">
        <name>K(+)</name>
        <dbReference type="ChEBI" id="CHEBI:29103"/>
    </cofactor>
    <text evidence="1">Binds 1 potassium ion per subunit.</text>
</comment>
<comment type="subunit">
    <text evidence="1">Homodimer. Heterotetramer of two MnmE and two MnmG subunits.</text>
</comment>
<comment type="subcellular location">
    <subcellularLocation>
        <location evidence="1">Cytoplasm</location>
    </subcellularLocation>
</comment>
<comment type="similarity">
    <text evidence="1">Belongs to the TRAFAC class TrmE-Era-EngA-EngB-Septin-like GTPase superfamily. TrmE GTPase family.</text>
</comment>